<evidence type="ECO:0000250" key="1"/>
<evidence type="ECO:0000255" key="2"/>
<evidence type="ECO:0000256" key="3">
    <source>
        <dbReference type="SAM" id="MobiDB-lite"/>
    </source>
</evidence>
<evidence type="ECO:0000305" key="4"/>
<protein>
    <recommendedName>
        <fullName>Probable cyclic nucleotide-gated ion channel 16</fullName>
    </recommendedName>
    <alternativeName>
        <fullName>Cyclic nucleotide- and calmodulin-regulated ion channel 16</fullName>
    </alternativeName>
</protein>
<comment type="function">
    <text>Putative cyclic nucleotide-gated ion channel.</text>
</comment>
<comment type="subunit">
    <text evidence="4">Homotetramer or heterotetramer.</text>
</comment>
<comment type="subcellular location">
    <subcellularLocation>
        <location evidence="4">Cell membrane</location>
        <topology evidence="4">Multi-pass membrane protein</topology>
    </subcellularLocation>
</comment>
<comment type="domain">
    <text evidence="1">The binding of calmodulin to the C-terminus might interfere with cyclic nucleotide binding and thus channel activation.</text>
</comment>
<comment type="similarity">
    <text evidence="4">Belongs to the cyclic nucleotide-gated cation channel (TC 1.A.1.5) family.</text>
</comment>
<proteinExistence type="evidence at transcript level"/>
<name>CNG16_ARATH</name>
<keyword id="KW-0112">Calmodulin-binding</keyword>
<keyword id="KW-0114">cAMP</keyword>
<keyword id="KW-0116">cAMP-binding</keyword>
<keyword id="KW-1003">Cell membrane</keyword>
<keyword id="KW-0140">cGMP</keyword>
<keyword id="KW-0142">cGMP-binding</keyword>
<keyword id="KW-0407">Ion channel</keyword>
<keyword id="KW-0406">Ion transport</keyword>
<keyword id="KW-1071">Ligand-gated ion channel</keyword>
<keyword id="KW-0472">Membrane</keyword>
<keyword id="KW-0547">Nucleotide-binding</keyword>
<keyword id="KW-1185">Reference proteome</keyword>
<keyword id="KW-0812">Transmembrane</keyword>
<keyword id="KW-1133">Transmembrane helix</keyword>
<keyword id="KW-0813">Transport</keyword>
<organism>
    <name type="scientific">Arabidopsis thaliana</name>
    <name type="common">Mouse-ear cress</name>
    <dbReference type="NCBI Taxonomy" id="3702"/>
    <lineage>
        <taxon>Eukaryota</taxon>
        <taxon>Viridiplantae</taxon>
        <taxon>Streptophyta</taxon>
        <taxon>Embryophyta</taxon>
        <taxon>Tracheophyta</taxon>
        <taxon>Spermatophyta</taxon>
        <taxon>Magnoliopsida</taxon>
        <taxon>eudicotyledons</taxon>
        <taxon>Gunneridae</taxon>
        <taxon>Pentapetalae</taxon>
        <taxon>rosids</taxon>
        <taxon>malvids</taxon>
        <taxon>Brassicales</taxon>
        <taxon>Brassicaceae</taxon>
        <taxon>Camelineae</taxon>
        <taxon>Arabidopsis</taxon>
    </lineage>
</organism>
<sequence length="705" mass="81955">MSNLHLYTSARFRNFPTTFSLRHHHNDPNNQRRRSIFSKLRDKTLDPGGDLITRWNHIFLITCLLALFLDPLYFYLPIVQAGTACMSIDVRFGIFVTCFRNLADLSFLIHILLKFKTAFVSKSSRVFGRGELVMDRREIAIRYLKSEFVIDLAATLPLPQIMIWFVIPNAGEFRYAAHQNHTLSLIVLIQYVPRFLVMLPLNRRIIKATGVAAKTAWSGAAYNLILYLLVSHVLGSVWYVLSIQRQHECWRRECIKEMNATHSPSCSLLFLDCGSLHDPGRQAWMRITRVLSNCDARNDDDQHFQFGMFGDAFTNDVTSSPFFDKYFYCLWWGLRNLSSYGQSLAASTLSSETIFSCFICVAGLVFFSHLIGNVQNYLQSTTARLDEWRVRRRDTEEWMRHRQLPDELQERVRRFVQYKWLTTRGVDEEAILRALPLDLRRQIQRHLCLALVRRVPFFAQMDDQLLDAICERLVPSLNTKDTYVIREGDPVNEMLFIIRGQMESSTTDGGRSGFFNSITLRPGDFCGEELLTWALVPNINHNLPLSTRTVRTLSEVEAFALRAEDLKFVANQFRRLHSKKLQHAFRYYSHQWRAWGTCFIQAAWRRYMKRKLAMELARQEEEDDYFYDDDGDYQFEEDMPESNNNNGDENSSNNQNLSATILASKFAANTKRGVLGNQRGSTRIDPDHPTLKMPKMFKPEDPGFF</sequence>
<gene>
    <name type="primary">CNGC16</name>
    <name type="ordered locus">At3g48010</name>
    <name type="ORF">T17F15.120</name>
</gene>
<feature type="chain" id="PRO_0000219344" description="Probable cyclic nucleotide-gated ion channel 16">
    <location>
        <begin position="1"/>
        <end position="705"/>
    </location>
</feature>
<feature type="topological domain" description="Cytoplasmic" evidence="2">
    <location>
        <begin position="1"/>
        <end position="57"/>
    </location>
</feature>
<feature type="transmembrane region" description="Helical; Name=H1" evidence="2">
    <location>
        <begin position="58"/>
        <end position="78"/>
    </location>
</feature>
<feature type="topological domain" description="Extracellular" evidence="2">
    <location>
        <begin position="79"/>
        <end position="91"/>
    </location>
</feature>
<feature type="transmembrane region" description="Helical; Name=H2" evidence="2">
    <location>
        <begin position="92"/>
        <end position="112"/>
    </location>
</feature>
<feature type="topological domain" description="Cytoplasmic" evidence="2">
    <location>
        <begin position="113"/>
        <end position="147"/>
    </location>
</feature>
<feature type="transmembrane region" description="Helical; Name=H3" evidence="2">
    <location>
        <begin position="148"/>
        <end position="168"/>
    </location>
</feature>
<feature type="topological domain" description="Extracellular" evidence="2">
    <location>
        <begin position="169"/>
        <end position="180"/>
    </location>
</feature>
<feature type="transmembrane region" description="Helical; Name=H4" evidence="2">
    <location>
        <begin position="181"/>
        <end position="201"/>
    </location>
</feature>
<feature type="topological domain" description="Cytoplasmic" evidence="2">
    <location>
        <begin position="202"/>
        <end position="222"/>
    </location>
</feature>
<feature type="transmembrane region" description="Helical; Name=H5" evidence="2">
    <location>
        <begin position="223"/>
        <end position="243"/>
    </location>
</feature>
<feature type="topological domain" description="Extracellular" evidence="2">
    <location>
        <begin position="244"/>
        <end position="353"/>
    </location>
</feature>
<feature type="transmembrane region" description="Helical; Name=H6" evidence="2">
    <location>
        <begin position="354"/>
        <end position="374"/>
    </location>
</feature>
<feature type="topological domain" description="Cytoplasmic" evidence="2">
    <location>
        <begin position="375"/>
        <end position="705"/>
    </location>
</feature>
<feature type="domain" description="IQ">
    <location>
        <begin position="593"/>
        <end position="622"/>
    </location>
</feature>
<feature type="region of interest" description="Calmodulin-binding" evidence="1">
    <location>
        <begin position="573"/>
        <end position="588"/>
    </location>
</feature>
<feature type="region of interest" description="Disordered" evidence="3">
    <location>
        <begin position="636"/>
        <end position="655"/>
    </location>
</feature>
<feature type="region of interest" description="Disordered" evidence="3">
    <location>
        <begin position="672"/>
        <end position="705"/>
    </location>
</feature>
<feature type="compositionally biased region" description="Low complexity" evidence="3">
    <location>
        <begin position="642"/>
        <end position="655"/>
    </location>
</feature>
<feature type="binding site">
    <location>
        <begin position="457"/>
        <end position="580"/>
    </location>
    <ligand>
        <name>a nucleoside 3',5'-cyclic phosphate</name>
        <dbReference type="ChEBI" id="CHEBI:58464"/>
    </ligand>
</feature>
<feature type="binding site" evidence="1">
    <location>
        <position position="528"/>
    </location>
    <ligand>
        <name>a nucleoside 3',5'-cyclic phosphate</name>
        <dbReference type="ChEBI" id="CHEBI:58464"/>
    </ligand>
</feature>
<dbReference type="EMBL" id="AL049658">
    <property type="protein sequence ID" value="CAB41138.1"/>
    <property type="molecule type" value="Genomic_DNA"/>
</dbReference>
<dbReference type="EMBL" id="CP002686">
    <property type="protein sequence ID" value="AEE78356.1"/>
    <property type="molecule type" value="Genomic_DNA"/>
</dbReference>
<dbReference type="EMBL" id="DQ446744">
    <property type="protein sequence ID" value="ABE65999.1"/>
    <property type="molecule type" value="mRNA"/>
</dbReference>
<dbReference type="PIR" id="T06682">
    <property type="entry name" value="T06682"/>
</dbReference>
<dbReference type="RefSeq" id="NP_190384.1">
    <property type="nucleotide sequence ID" value="NM_114670.2"/>
</dbReference>
<dbReference type="BioGRID" id="9275">
    <property type="interactions" value="1"/>
</dbReference>
<dbReference type="FunCoup" id="Q9SU64">
    <property type="interactions" value="202"/>
</dbReference>
<dbReference type="STRING" id="3702.Q9SU64"/>
<dbReference type="PaxDb" id="3702-AT3G48010.1"/>
<dbReference type="ProteomicsDB" id="220290"/>
<dbReference type="EnsemblPlants" id="AT3G48010.1">
    <property type="protein sequence ID" value="AT3G48010.1"/>
    <property type="gene ID" value="AT3G48010"/>
</dbReference>
<dbReference type="GeneID" id="823956"/>
<dbReference type="Gramene" id="AT3G48010.1">
    <property type="protein sequence ID" value="AT3G48010.1"/>
    <property type="gene ID" value="AT3G48010"/>
</dbReference>
<dbReference type="KEGG" id="ath:AT3G48010"/>
<dbReference type="Araport" id="AT3G48010"/>
<dbReference type="TAIR" id="AT3G48010">
    <property type="gene designation" value="CNGC16"/>
</dbReference>
<dbReference type="eggNOG" id="KOG0498">
    <property type="taxonomic scope" value="Eukaryota"/>
</dbReference>
<dbReference type="HOGENOM" id="CLU_013069_3_0_1"/>
<dbReference type="InParanoid" id="Q9SU64"/>
<dbReference type="OMA" id="MIWFVIP"/>
<dbReference type="PhylomeDB" id="Q9SU64"/>
<dbReference type="PRO" id="PR:Q9SU64"/>
<dbReference type="Proteomes" id="UP000006548">
    <property type="component" value="Chromosome 3"/>
</dbReference>
<dbReference type="ExpressionAtlas" id="Q9SU64">
    <property type="expression patterns" value="baseline and differential"/>
</dbReference>
<dbReference type="GO" id="GO:0005886">
    <property type="term" value="C:plasma membrane"/>
    <property type="evidence" value="ECO:0007669"/>
    <property type="project" value="UniProtKB-SubCell"/>
</dbReference>
<dbReference type="GO" id="GO:0005516">
    <property type="term" value="F:calmodulin binding"/>
    <property type="evidence" value="ECO:0007669"/>
    <property type="project" value="UniProtKB-KW"/>
</dbReference>
<dbReference type="GO" id="GO:0030552">
    <property type="term" value="F:cAMP binding"/>
    <property type="evidence" value="ECO:0007669"/>
    <property type="project" value="UniProtKB-KW"/>
</dbReference>
<dbReference type="GO" id="GO:0030553">
    <property type="term" value="F:cGMP binding"/>
    <property type="evidence" value="ECO:0007669"/>
    <property type="project" value="UniProtKB-KW"/>
</dbReference>
<dbReference type="GO" id="GO:0005216">
    <property type="term" value="F:monoatomic ion channel activity"/>
    <property type="evidence" value="ECO:0007669"/>
    <property type="project" value="InterPro"/>
</dbReference>
<dbReference type="CDD" id="cd00038">
    <property type="entry name" value="CAP_ED"/>
    <property type="match status" value="1"/>
</dbReference>
<dbReference type="FunFam" id="2.60.120.10:FF:000024">
    <property type="entry name" value="Cyclic nucleotide-gated ion channel 1"/>
    <property type="match status" value="1"/>
</dbReference>
<dbReference type="Gene3D" id="1.10.287.70">
    <property type="match status" value="1"/>
</dbReference>
<dbReference type="Gene3D" id="1.10.287.630">
    <property type="entry name" value="Helix hairpin bin"/>
    <property type="match status" value="1"/>
</dbReference>
<dbReference type="Gene3D" id="2.60.120.10">
    <property type="entry name" value="Jelly Rolls"/>
    <property type="match status" value="1"/>
</dbReference>
<dbReference type="InterPro" id="IPR000595">
    <property type="entry name" value="cNMP-bd_dom"/>
</dbReference>
<dbReference type="InterPro" id="IPR018490">
    <property type="entry name" value="cNMP-bd_dom_sf"/>
</dbReference>
<dbReference type="InterPro" id="IPR005821">
    <property type="entry name" value="Ion_trans_dom"/>
</dbReference>
<dbReference type="InterPro" id="IPR014710">
    <property type="entry name" value="RmlC-like_jellyroll"/>
</dbReference>
<dbReference type="PANTHER" id="PTHR45651">
    <property type="entry name" value="CYCLIC NUCLEOTIDE-GATED ION CHANNEL 15-RELATED-RELATED"/>
    <property type="match status" value="1"/>
</dbReference>
<dbReference type="PANTHER" id="PTHR45651:SF114">
    <property type="entry name" value="CYCLIC NUCLEOTIDE-GATED ION CHANNEL 16-RELATED"/>
    <property type="match status" value="1"/>
</dbReference>
<dbReference type="Pfam" id="PF00027">
    <property type="entry name" value="cNMP_binding"/>
    <property type="match status" value="1"/>
</dbReference>
<dbReference type="Pfam" id="PF00520">
    <property type="entry name" value="Ion_trans"/>
    <property type="match status" value="1"/>
</dbReference>
<dbReference type="SMART" id="SM00100">
    <property type="entry name" value="cNMP"/>
    <property type="match status" value="1"/>
</dbReference>
<dbReference type="SUPFAM" id="SSF51206">
    <property type="entry name" value="cAMP-binding domain-like"/>
    <property type="match status" value="1"/>
</dbReference>
<dbReference type="SUPFAM" id="SSF81324">
    <property type="entry name" value="Voltage-gated potassium channels"/>
    <property type="match status" value="1"/>
</dbReference>
<dbReference type="PROSITE" id="PS50042">
    <property type="entry name" value="CNMP_BINDING_3"/>
    <property type="match status" value="1"/>
</dbReference>
<accession>Q9SU64</accession>
<accession>Q1PEH4</accession>
<reference key="1">
    <citation type="journal article" date="2000" name="Nature">
        <title>Sequence and analysis of chromosome 3 of the plant Arabidopsis thaliana.</title>
        <authorList>
            <person name="Salanoubat M."/>
            <person name="Lemcke K."/>
            <person name="Rieger M."/>
            <person name="Ansorge W."/>
            <person name="Unseld M."/>
            <person name="Fartmann B."/>
            <person name="Valle G."/>
            <person name="Bloecker H."/>
            <person name="Perez-Alonso M."/>
            <person name="Obermaier B."/>
            <person name="Delseny M."/>
            <person name="Boutry M."/>
            <person name="Grivell L.A."/>
            <person name="Mache R."/>
            <person name="Puigdomenech P."/>
            <person name="De Simone V."/>
            <person name="Choisne N."/>
            <person name="Artiguenave F."/>
            <person name="Robert C."/>
            <person name="Brottier P."/>
            <person name="Wincker P."/>
            <person name="Cattolico L."/>
            <person name="Weissenbach J."/>
            <person name="Saurin W."/>
            <person name="Quetier F."/>
            <person name="Schaefer M."/>
            <person name="Mueller-Auer S."/>
            <person name="Gabel C."/>
            <person name="Fuchs M."/>
            <person name="Benes V."/>
            <person name="Wurmbach E."/>
            <person name="Drzonek H."/>
            <person name="Erfle H."/>
            <person name="Jordan N."/>
            <person name="Bangert S."/>
            <person name="Wiedelmann R."/>
            <person name="Kranz H."/>
            <person name="Voss H."/>
            <person name="Holland R."/>
            <person name="Brandt P."/>
            <person name="Nyakatura G."/>
            <person name="Vezzi A."/>
            <person name="D'Angelo M."/>
            <person name="Pallavicini A."/>
            <person name="Toppo S."/>
            <person name="Simionati B."/>
            <person name="Conrad A."/>
            <person name="Hornischer K."/>
            <person name="Kauer G."/>
            <person name="Loehnert T.-H."/>
            <person name="Nordsiek G."/>
            <person name="Reichelt J."/>
            <person name="Scharfe M."/>
            <person name="Schoen O."/>
            <person name="Bargues M."/>
            <person name="Terol J."/>
            <person name="Climent J."/>
            <person name="Navarro P."/>
            <person name="Collado C."/>
            <person name="Perez-Perez A."/>
            <person name="Ottenwaelder B."/>
            <person name="Duchemin D."/>
            <person name="Cooke R."/>
            <person name="Laudie M."/>
            <person name="Berger-Llauro C."/>
            <person name="Purnelle B."/>
            <person name="Masuy D."/>
            <person name="de Haan M."/>
            <person name="Maarse A.C."/>
            <person name="Alcaraz J.-P."/>
            <person name="Cottet A."/>
            <person name="Casacuberta E."/>
            <person name="Monfort A."/>
            <person name="Argiriou A."/>
            <person name="Flores M."/>
            <person name="Liguori R."/>
            <person name="Vitale D."/>
            <person name="Mannhaupt G."/>
            <person name="Haase D."/>
            <person name="Schoof H."/>
            <person name="Rudd S."/>
            <person name="Zaccaria P."/>
            <person name="Mewes H.-W."/>
            <person name="Mayer K.F.X."/>
            <person name="Kaul S."/>
            <person name="Town C.D."/>
            <person name="Koo H.L."/>
            <person name="Tallon L.J."/>
            <person name="Jenkins J."/>
            <person name="Rooney T."/>
            <person name="Rizzo M."/>
            <person name="Walts A."/>
            <person name="Utterback T."/>
            <person name="Fujii C.Y."/>
            <person name="Shea T.P."/>
            <person name="Creasy T.H."/>
            <person name="Haas B."/>
            <person name="Maiti R."/>
            <person name="Wu D."/>
            <person name="Peterson J."/>
            <person name="Van Aken S."/>
            <person name="Pai G."/>
            <person name="Militscher J."/>
            <person name="Sellers P."/>
            <person name="Gill J.E."/>
            <person name="Feldblyum T.V."/>
            <person name="Preuss D."/>
            <person name="Lin X."/>
            <person name="Nierman W.C."/>
            <person name="Salzberg S.L."/>
            <person name="White O."/>
            <person name="Venter J.C."/>
            <person name="Fraser C.M."/>
            <person name="Kaneko T."/>
            <person name="Nakamura Y."/>
            <person name="Sato S."/>
            <person name="Kato T."/>
            <person name="Asamizu E."/>
            <person name="Sasamoto S."/>
            <person name="Kimura T."/>
            <person name="Idesawa K."/>
            <person name="Kawashima K."/>
            <person name="Kishida Y."/>
            <person name="Kiyokawa C."/>
            <person name="Kohara M."/>
            <person name="Matsumoto M."/>
            <person name="Matsuno A."/>
            <person name="Muraki A."/>
            <person name="Nakayama S."/>
            <person name="Nakazaki N."/>
            <person name="Shinpo S."/>
            <person name="Takeuchi C."/>
            <person name="Wada T."/>
            <person name="Watanabe A."/>
            <person name="Yamada M."/>
            <person name="Yasuda M."/>
            <person name="Tabata S."/>
        </authorList>
    </citation>
    <scope>NUCLEOTIDE SEQUENCE [LARGE SCALE GENOMIC DNA]</scope>
    <source>
        <strain>cv. Columbia</strain>
    </source>
</reference>
<reference key="2">
    <citation type="journal article" date="2017" name="Plant J.">
        <title>Araport11: a complete reannotation of the Arabidopsis thaliana reference genome.</title>
        <authorList>
            <person name="Cheng C.Y."/>
            <person name="Krishnakumar V."/>
            <person name="Chan A.P."/>
            <person name="Thibaud-Nissen F."/>
            <person name="Schobel S."/>
            <person name="Town C.D."/>
        </authorList>
    </citation>
    <scope>GENOME REANNOTATION</scope>
    <source>
        <strain>cv. Columbia</strain>
    </source>
</reference>
<reference key="3">
    <citation type="journal article" date="2006" name="Plant Biotechnol. J.">
        <title>Simultaneous high-throughput recombinational cloning of open reading frames in closed and open configurations.</title>
        <authorList>
            <person name="Underwood B.A."/>
            <person name="Vanderhaeghen R."/>
            <person name="Whitford R."/>
            <person name="Town C.D."/>
            <person name="Hilson P."/>
        </authorList>
    </citation>
    <scope>NUCLEOTIDE SEQUENCE [LARGE SCALE MRNA] OF 86-705</scope>
    <source>
        <strain>cv. Columbia</strain>
    </source>
</reference>
<reference key="4">
    <citation type="journal article" date="2001" name="Plant Physiol.">
        <title>Phylogenetic relationships within cation transporter families of Arabidopsis.</title>
        <authorList>
            <person name="Maeser P."/>
            <person name="Thomine S."/>
            <person name="Schroeder J.I."/>
            <person name="Ward J.M."/>
            <person name="Hirschi K."/>
            <person name="Sze H."/>
            <person name="Talke I.N."/>
            <person name="Amtmann A."/>
            <person name="Maathuis F.J.M."/>
            <person name="Sanders D."/>
            <person name="Harper J.F."/>
            <person name="Tchieu J."/>
            <person name="Gribskov M."/>
            <person name="Persans M.W."/>
            <person name="Salt D.E."/>
            <person name="Kim S.A."/>
            <person name="Guerinot M.L."/>
        </authorList>
    </citation>
    <scope>GENE FAMILY</scope>
    <scope>NOMENCLATURE</scope>
</reference>